<reference key="1">
    <citation type="submission" date="2002-12" db="EMBL/GenBank/DDBJ databases">
        <title>Cloning, expression and genomic organization of a new human alpha3-fucosyltransferase (FUT11).</title>
        <authorList>
            <person name="Candelier J.-J."/>
            <person name="Martinez-Duncker I."/>
            <person name="Oriol R."/>
            <person name="Mollicone R."/>
        </authorList>
    </citation>
    <scope>NUCLEOTIDE SEQUENCE [MRNA]</scope>
</reference>
<reference key="2">
    <citation type="journal article" date="2004" name="Genome Res.">
        <title>The status, quality, and expansion of the NIH full-length cDNA project: the Mammalian Gene Collection (MGC).</title>
        <authorList>
            <consortium name="The MGC Project Team"/>
        </authorList>
    </citation>
    <scope>NUCLEOTIDE SEQUENCE [LARGE SCALE MRNA]</scope>
    <source>
        <tissue>Testis</tissue>
    </source>
</reference>
<accession>Q68FV3</accession>
<accession>Q8CG40</accession>
<comment type="function">
    <text evidence="2">Protein O-fucosyltransferase that specifically catalyzes O-fucosylation of serine or threonine residues in EMI domains of target proteins, such as MMRN1, MMRN2 and EMID1. Attaches fucose through an O-glycosidic linkage. O-fucosylation of EMI domain-containing proteins may be required for facilitating protein folding and secretion. Also shows minor alpha-(1,3)-fucosyltransferase activity toward activity toward biantennary N-glycan acceptors. However, this was tested with a library of synthetic substrates and this activity is unsure in vivo.</text>
</comment>
<comment type="catalytic activity">
    <reaction evidence="2">
        <text>L-threonyl-[protein] + GDP-beta-L-fucose = 3-O-(alpha-L-fucosyl)-L-threonyl-[protein] + GDP + H(+)</text>
        <dbReference type="Rhea" id="RHEA:70491"/>
        <dbReference type="Rhea" id="RHEA-COMP:11060"/>
        <dbReference type="Rhea" id="RHEA-COMP:17915"/>
        <dbReference type="ChEBI" id="CHEBI:15378"/>
        <dbReference type="ChEBI" id="CHEBI:30013"/>
        <dbReference type="ChEBI" id="CHEBI:57273"/>
        <dbReference type="ChEBI" id="CHEBI:58189"/>
        <dbReference type="ChEBI" id="CHEBI:189631"/>
        <dbReference type="EC" id="2.4.1.221"/>
    </reaction>
    <physiologicalReaction direction="left-to-right" evidence="2">
        <dbReference type="Rhea" id="RHEA:70492"/>
    </physiologicalReaction>
</comment>
<comment type="catalytic activity">
    <reaction evidence="2">
        <text>L-seryl-[protein] + GDP-beta-L-fucose = 3-O-(alpha-L-fucosyl)-L-seryl-[protein] + GDP + H(+)</text>
        <dbReference type="Rhea" id="RHEA:63644"/>
        <dbReference type="Rhea" id="RHEA-COMP:9863"/>
        <dbReference type="Rhea" id="RHEA-COMP:17914"/>
        <dbReference type="ChEBI" id="CHEBI:15378"/>
        <dbReference type="ChEBI" id="CHEBI:29999"/>
        <dbReference type="ChEBI" id="CHEBI:57273"/>
        <dbReference type="ChEBI" id="CHEBI:58189"/>
        <dbReference type="ChEBI" id="CHEBI:189632"/>
        <dbReference type="EC" id="2.4.1.221"/>
    </reaction>
    <physiologicalReaction direction="left-to-right" evidence="2">
        <dbReference type="Rhea" id="RHEA:63645"/>
    </physiologicalReaction>
</comment>
<comment type="pathway">
    <text evidence="2">Protein modification; protein glycosylation.</text>
</comment>
<comment type="subcellular location">
    <subcellularLocation>
        <location evidence="2">Endoplasmic reticulum membrane</location>
        <topology evidence="3">Single-pass type II membrane protein</topology>
    </subcellularLocation>
</comment>
<comment type="similarity">
    <text evidence="4">Belongs to the glycosyltransferase 10 family.</text>
</comment>
<feature type="chain" id="PRO_0000299011" description="GDP-fucose protein O-fucosyltransferase 4">
    <location>
        <begin position="1"/>
        <end position="494"/>
    </location>
</feature>
<feature type="topological domain" description="Cytoplasmic" evidence="3">
    <location>
        <begin position="1"/>
        <end position="7"/>
    </location>
</feature>
<feature type="transmembrane region" description="Helical; Signal-anchor for type II membrane protein" evidence="3">
    <location>
        <begin position="8"/>
        <end position="24"/>
    </location>
</feature>
<feature type="topological domain" description="Lumenal" evidence="3">
    <location>
        <begin position="25"/>
        <end position="494"/>
    </location>
</feature>
<feature type="glycosylation site" description="N-linked (GlcNAc...) asparagine" evidence="3">
    <location>
        <position position="167"/>
    </location>
</feature>
<feature type="disulfide bond" evidence="1">
    <location>
        <begin position="390"/>
        <end position="393"/>
    </location>
</feature>
<feature type="sequence conflict" description="In Ref. 1; CAD59737." evidence="4" ref="1">
    <original>EP</original>
    <variation>A</variation>
    <location>
        <begin position="41"/>
        <end position="42"/>
    </location>
</feature>
<feature type="sequence conflict" description="In Ref. 1; CAD59737." evidence="4" ref="1">
    <original>MEN</original>
    <variation>LEK</variation>
    <location>
        <begin position="281"/>
        <end position="283"/>
    </location>
</feature>
<organism>
    <name type="scientific">Rattus norvegicus</name>
    <name type="common">Rat</name>
    <dbReference type="NCBI Taxonomy" id="10116"/>
    <lineage>
        <taxon>Eukaryota</taxon>
        <taxon>Metazoa</taxon>
        <taxon>Chordata</taxon>
        <taxon>Craniata</taxon>
        <taxon>Vertebrata</taxon>
        <taxon>Euteleostomi</taxon>
        <taxon>Mammalia</taxon>
        <taxon>Eutheria</taxon>
        <taxon>Euarchontoglires</taxon>
        <taxon>Glires</taxon>
        <taxon>Rodentia</taxon>
        <taxon>Myomorpha</taxon>
        <taxon>Muroidea</taxon>
        <taxon>Muridae</taxon>
        <taxon>Murinae</taxon>
        <taxon>Rattus</taxon>
    </lineage>
</organism>
<proteinExistence type="evidence at transcript level"/>
<protein>
    <recommendedName>
        <fullName>GDP-fucose protein O-fucosyltransferase 4</fullName>
        <ecNumber evidence="2">2.4.1.221</ecNumber>
    </recommendedName>
    <alternativeName>
        <fullName>Alpha-(1,3)-fucosyltransferase 11</fullName>
        <ecNumber evidence="2">2.4.1.-</ecNumber>
    </alternativeName>
    <alternativeName>
        <fullName>Fucosyltransferase XI</fullName>
        <shortName>Fuc-TXI</shortName>
        <shortName>FucT-XI</shortName>
    </alternativeName>
    <alternativeName>
        <fullName>Galactoside 3-L-fucosyltransferase 11</fullName>
        <shortName>Fucosyltransferase 11</shortName>
    </alternativeName>
</protein>
<dbReference type="EC" id="2.4.1.221" evidence="2"/>
<dbReference type="EC" id="2.4.1.-" evidence="2"/>
<dbReference type="EMBL" id="AJ535753">
    <property type="protein sequence ID" value="CAD59737.1"/>
    <property type="molecule type" value="mRNA"/>
</dbReference>
<dbReference type="EMBL" id="BC079316">
    <property type="protein sequence ID" value="AAH79316.1"/>
    <property type="molecule type" value="mRNA"/>
</dbReference>
<dbReference type="RefSeq" id="NP_775430.2">
    <property type="nucleotide sequence ID" value="NM_173308.2"/>
</dbReference>
<dbReference type="SMR" id="Q68FV3"/>
<dbReference type="FunCoup" id="Q68FV3">
    <property type="interactions" value="2611"/>
</dbReference>
<dbReference type="STRING" id="10116.ENSRNOP00000012300"/>
<dbReference type="CAZy" id="GT10">
    <property type="family name" value="Glycosyltransferase Family 10"/>
</dbReference>
<dbReference type="GlyCosmos" id="Q68FV3">
    <property type="glycosylation" value="1 site, No reported glycans"/>
</dbReference>
<dbReference type="GlyGen" id="Q68FV3">
    <property type="glycosylation" value="2 sites"/>
</dbReference>
<dbReference type="PhosphoSitePlus" id="Q68FV3"/>
<dbReference type="PaxDb" id="10116-ENSRNOP00000012300"/>
<dbReference type="Ensembl" id="ENSRNOT00000012300.4">
    <property type="protein sequence ID" value="ENSRNOP00000012300.1"/>
    <property type="gene ID" value="ENSRNOG00000009274.6"/>
</dbReference>
<dbReference type="GeneID" id="286971"/>
<dbReference type="KEGG" id="rno:286971"/>
<dbReference type="UCSC" id="RGD:628731">
    <property type="organism name" value="rat"/>
</dbReference>
<dbReference type="AGR" id="RGD:628731"/>
<dbReference type="CTD" id="170384"/>
<dbReference type="RGD" id="628731">
    <property type="gene designation" value="Fut11"/>
</dbReference>
<dbReference type="eggNOG" id="KOG2619">
    <property type="taxonomic scope" value="Eukaryota"/>
</dbReference>
<dbReference type="GeneTree" id="ENSGT00940000158983"/>
<dbReference type="HOGENOM" id="CLU_032075_0_1_1"/>
<dbReference type="InParanoid" id="Q68FV3"/>
<dbReference type="OMA" id="EHREWGV"/>
<dbReference type="OrthoDB" id="9993460at2759"/>
<dbReference type="PhylomeDB" id="Q68FV3"/>
<dbReference type="TreeFam" id="TF316348"/>
<dbReference type="Reactome" id="R-RNO-9037629">
    <property type="pathway name" value="Lewis blood group biosynthesis"/>
</dbReference>
<dbReference type="UniPathway" id="UPA00378"/>
<dbReference type="PRO" id="PR:Q68FV3"/>
<dbReference type="Proteomes" id="UP000002494">
    <property type="component" value="Chromosome 15"/>
</dbReference>
<dbReference type="Bgee" id="ENSRNOG00000009274">
    <property type="expression patterns" value="Expressed in ovary and 18 other cell types or tissues"/>
</dbReference>
<dbReference type="GO" id="GO:0005783">
    <property type="term" value="C:endoplasmic reticulum"/>
    <property type="evidence" value="ECO:0000250"/>
    <property type="project" value="UniProtKB"/>
</dbReference>
<dbReference type="GO" id="GO:0005789">
    <property type="term" value="C:endoplasmic reticulum membrane"/>
    <property type="evidence" value="ECO:0007669"/>
    <property type="project" value="UniProtKB-SubCell"/>
</dbReference>
<dbReference type="GO" id="GO:0000139">
    <property type="term" value="C:Golgi membrane"/>
    <property type="evidence" value="ECO:0007669"/>
    <property type="project" value="InterPro"/>
</dbReference>
<dbReference type="GO" id="GO:0046920">
    <property type="term" value="F:alpha-(1-&gt;3)-fucosyltransferase activity"/>
    <property type="evidence" value="ECO:0000318"/>
    <property type="project" value="GO_Central"/>
</dbReference>
<dbReference type="GO" id="GO:0008417">
    <property type="term" value="F:fucosyltransferase activity"/>
    <property type="evidence" value="ECO:0000250"/>
    <property type="project" value="UniProtKB"/>
</dbReference>
<dbReference type="GO" id="GO:0046922">
    <property type="term" value="F:peptide-O-fucosyltransferase activity"/>
    <property type="evidence" value="ECO:0000250"/>
    <property type="project" value="UniProtKB"/>
</dbReference>
<dbReference type="GO" id="GO:0036065">
    <property type="term" value="P:fucosylation"/>
    <property type="evidence" value="ECO:0000318"/>
    <property type="project" value="GO_Central"/>
</dbReference>
<dbReference type="GO" id="GO:0036071">
    <property type="term" value="P:N-glycan fucosylation"/>
    <property type="evidence" value="ECO:0000250"/>
    <property type="project" value="UniProtKB"/>
</dbReference>
<dbReference type="GO" id="GO:0050714">
    <property type="term" value="P:positive regulation of protein secretion"/>
    <property type="evidence" value="ECO:0000250"/>
    <property type="project" value="UniProtKB"/>
</dbReference>
<dbReference type="FunFam" id="3.40.50.11660:FF:000002">
    <property type="entry name" value="Alpha-(1,3)-fucosyltransferase"/>
    <property type="match status" value="1"/>
</dbReference>
<dbReference type="Gene3D" id="3.40.50.11660">
    <property type="entry name" value="Glycosyl transferase family 10, C-terminal domain"/>
    <property type="match status" value="1"/>
</dbReference>
<dbReference type="InterPro" id="IPR017176">
    <property type="entry name" value="Alpha-1_3-FUT_met"/>
</dbReference>
<dbReference type="InterPro" id="IPR055270">
    <property type="entry name" value="Glyco_tran_10_C"/>
</dbReference>
<dbReference type="InterPro" id="IPR031481">
    <property type="entry name" value="Glyco_tran_10_N"/>
</dbReference>
<dbReference type="InterPro" id="IPR001503">
    <property type="entry name" value="Glyco_trans_10"/>
</dbReference>
<dbReference type="InterPro" id="IPR038577">
    <property type="entry name" value="GT10-like_C_sf"/>
</dbReference>
<dbReference type="PANTHER" id="PTHR11929">
    <property type="entry name" value="ALPHA- 1,3 -FUCOSYLTRANSFERASE"/>
    <property type="match status" value="1"/>
</dbReference>
<dbReference type="PANTHER" id="PTHR11929:SF198">
    <property type="entry name" value="ALPHA-(1,3)-FUCOSYLTRANSFERASE 11"/>
    <property type="match status" value="1"/>
</dbReference>
<dbReference type="Pfam" id="PF17039">
    <property type="entry name" value="Glyco_tran_10_N"/>
    <property type="match status" value="1"/>
</dbReference>
<dbReference type="Pfam" id="PF00852">
    <property type="entry name" value="Glyco_transf_10"/>
    <property type="match status" value="1"/>
</dbReference>
<dbReference type="PIRSF" id="PIRSF037332">
    <property type="entry name" value="Alpha1_3FUT_met"/>
    <property type="match status" value="1"/>
</dbReference>
<dbReference type="SUPFAM" id="SSF53756">
    <property type="entry name" value="UDP-Glycosyltransferase/glycogen phosphorylase"/>
    <property type="match status" value="1"/>
</dbReference>
<gene>
    <name type="primary">Fut11</name>
    <name evidence="2" type="synonym">Pofut4</name>
</gene>
<sequence>MAARYTEAVLAALGVLSVCSASSSSGSGASGKAGGEAEWAEPWDGAVFRPPAALGAVGMTRGLGSPPPGNAETVDLPVLLWWSPGLFPHFPGDSERIECALGACVASRDRRARADPRTRALLFYGTDFRAADAPLPRLAHQSWALLHEESPLNNFLLSHGPGIRLFNLTATFSRHSDYPLPLQWLPGAAYLRRPAPPLRERAEWRRRGYAPLLYLQSHCDVPSDRDRYVRELMRYIPVDSYGKCLQNREPPTVRLQDTATATTEDPELMAFLSRYKFHLAMENAICNDYMTEKLWRPMHLGAVPVYRGSPSVRDWMPNNHSVILIDDFESPQKLAEFIDFLDKNDEEYMKYLAYKQPGGITNQFLLDNLEHREWGVNDPMLPNYLNGFECFVCDHELARLDAEKAHESSPRDIPVLEPHIAQLSHMDCPVPTPGFGKVEEIPENDSWKEMWLQDYWQGLYQGEALTAMIHNNETQQSKFWDYVHEIFMKRNKNL</sequence>
<name>OFUT4_RAT</name>
<evidence type="ECO:0000250" key="1">
    <source>
        <dbReference type="UniProtKB" id="Q11130"/>
    </source>
</evidence>
<evidence type="ECO:0000250" key="2">
    <source>
        <dbReference type="UniProtKB" id="Q495W5"/>
    </source>
</evidence>
<evidence type="ECO:0000255" key="3"/>
<evidence type="ECO:0000305" key="4"/>
<keyword id="KW-1015">Disulfide bond</keyword>
<keyword id="KW-0256">Endoplasmic reticulum</keyword>
<keyword id="KW-0325">Glycoprotein</keyword>
<keyword id="KW-0328">Glycosyltransferase</keyword>
<keyword id="KW-0472">Membrane</keyword>
<keyword id="KW-1185">Reference proteome</keyword>
<keyword id="KW-0735">Signal-anchor</keyword>
<keyword id="KW-0808">Transferase</keyword>
<keyword id="KW-0812">Transmembrane</keyword>
<keyword id="KW-1133">Transmembrane helix</keyword>